<comment type="function">
    <text evidence="1">Promotes RNA polymerase assembly. Latches the N- and C-terminal regions of the beta' subunit thereby facilitating its interaction with the beta and alpha subunits.</text>
</comment>
<comment type="catalytic activity">
    <reaction evidence="1">
        <text>RNA(n) + a ribonucleoside 5'-triphosphate = RNA(n+1) + diphosphate</text>
        <dbReference type="Rhea" id="RHEA:21248"/>
        <dbReference type="Rhea" id="RHEA-COMP:14527"/>
        <dbReference type="Rhea" id="RHEA-COMP:17342"/>
        <dbReference type="ChEBI" id="CHEBI:33019"/>
        <dbReference type="ChEBI" id="CHEBI:61557"/>
        <dbReference type="ChEBI" id="CHEBI:140395"/>
        <dbReference type="EC" id="2.7.7.6"/>
    </reaction>
</comment>
<comment type="subunit">
    <text evidence="1">The RNAP catalytic core consists of 2 alpha, 1 beta, 1 beta' and 1 omega subunit. When a sigma factor is associated with the core the holoenzyme is formed, which can initiate transcription.</text>
</comment>
<comment type="similarity">
    <text evidence="1">Belongs to the RNA polymerase subunit omega family.</text>
</comment>
<gene>
    <name evidence="1" type="primary">rpoZ</name>
    <name type="ordered locus">BPSL2562</name>
</gene>
<keyword id="KW-0240">DNA-directed RNA polymerase</keyword>
<keyword id="KW-0548">Nucleotidyltransferase</keyword>
<keyword id="KW-1185">Reference proteome</keyword>
<keyword id="KW-0804">Transcription</keyword>
<keyword id="KW-0808">Transferase</keyword>
<dbReference type="EC" id="2.7.7.6" evidence="1"/>
<dbReference type="EMBL" id="BX571965">
    <property type="protein sequence ID" value="CAH36570.1"/>
    <property type="molecule type" value="Genomic_DNA"/>
</dbReference>
<dbReference type="RefSeq" id="WP_004185855.1">
    <property type="nucleotide sequence ID" value="NZ_CP009538.1"/>
</dbReference>
<dbReference type="RefSeq" id="YP_109159.1">
    <property type="nucleotide sequence ID" value="NC_006350.1"/>
</dbReference>
<dbReference type="SMR" id="Q63RV8"/>
<dbReference type="STRING" id="272560.BPSL2562"/>
<dbReference type="GeneID" id="93061155"/>
<dbReference type="KEGG" id="bps:BPSL2562"/>
<dbReference type="PATRIC" id="fig|272560.51.peg.2802"/>
<dbReference type="eggNOG" id="COG1758">
    <property type="taxonomic scope" value="Bacteria"/>
</dbReference>
<dbReference type="Proteomes" id="UP000000605">
    <property type="component" value="Chromosome 1"/>
</dbReference>
<dbReference type="GO" id="GO:0000428">
    <property type="term" value="C:DNA-directed RNA polymerase complex"/>
    <property type="evidence" value="ECO:0007669"/>
    <property type="project" value="UniProtKB-KW"/>
</dbReference>
<dbReference type="GO" id="GO:0003677">
    <property type="term" value="F:DNA binding"/>
    <property type="evidence" value="ECO:0007669"/>
    <property type="project" value="UniProtKB-UniRule"/>
</dbReference>
<dbReference type="GO" id="GO:0003899">
    <property type="term" value="F:DNA-directed RNA polymerase activity"/>
    <property type="evidence" value="ECO:0007669"/>
    <property type="project" value="UniProtKB-UniRule"/>
</dbReference>
<dbReference type="GO" id="GO:0006351">
    <property type="term" value="P:DNA-templated transcription"/>
    <property type="evidence" value="ECO:0007669"/>
    <property type="project" value="UniProtKB-UniRule"/>
</dbReference>
<dbReference type="Gene3D" id="3.90.940.10">
    <property type="match status" value="1"/>
</dbReference>
<dbReference type="HAMAP" id="MF_00366">
    <property type="entry name" value="RNApol_bact_RpoZ"/>
    <property type="match status" value="1"/>
</dbReference>
<dbReference type="InterPro" id="IPR003716">
    <property type="entry name" value="DNA-dir_RNA_pol_omega"/>
</dbReference>
<dbReference type="InterPro" id="IPR006110">
    <property type="entry name" value="Pol_omega/Rpo6/RPB6"/>
</dbReference>
<dbReference type="InterPro" id="IPR036161">
    <property type="entry name" value="RPB6/omega-like_sf"/>
</dbReference>
<dbReference type="NCBIfam" id="TIGR00690">
    <property type="entry name" value="rpoZ"/>
    <property type="match status" value="1"/>
</dbReference>
<dbReference type="PANTHER" id="PTHR34476">
    <property type="entry name" value="DNA-DIRECTED RNA POLYMERASE SUBUNIT OMEGA"/>
    <property type="match status" value="1"/>
</dbReference>
<dbReference type="PANTHER" id="PTHR34476:SF1">
    <property type="entry name" value="DNA-DIRECTED RNA POLYMERASE SUBUNIT OMEGA"/>
    <property type="match status" value="1"/>
</dbReference>
<dbReference type="Pfam" id="PF01192">
    <property type="entry name" value="RNA_pol_Rpb6"/>
    <property type="match status" value="1"/>
</dbReference>
<dbReference type="SMART" id="SM01409">
    <property type="entry name" value="RNA_pol_Rpb6"/>
    <property type="match status" value="1"/>
</dbReference>
<dbReference type="SUPFAM" id="SSF63562">
    <property type="entry name" value="RPB6/omega subunit-like"/>
    <property type="match status" value="1"/>
</dbReference>
<protein>
    <recommendedName>
        <fullName evidence="1">DNA-directed RNA polymerase subunit omega</fullName>
        <shortName evidence="1">RNAP omega subunit</shortName>
        <ecNumber evidence="1">2.7.7.6</ecNumber>
    </recommendedName>
    <alternativeName>
        <fullName evidence="1">RNA polymerase omega subunit</fullName>
    </alternativeName>
    <alternativeName>
        <fullName evidence="1">Transcriptase subunit omega</fullName>
    </alternativeName>
</protein>
<organism>
    <name type="scientific">Burkholderia pseudomallei (strain K96243)</name>
    <dbReference type="NCBI Taxonomy" id="272560"/>
    <lineage>
        <taxon>Bacteria</taxon>
        <taxon>Pseudomonadati</taxon>
        <taxon>Pseudomonadota</taxon>
        <taxon>Betaproteobacteria</taxon>
        <taxon>Burkholderiales</taxon>
        <taxon>Burkholderiaceae</taxon>
        <taxon>Burkholderia</taxon>
        <taxon>pseudomallei group</taxon>
    </lineage>
</organism>
<sequence length="67" mass="7400">MARITVEDCLKQIPNRFELALAATYRARQLAQGHTPKIESRDKPTVVALREIAAGQVGVEMLKKVPA</sequence>
<name>RPOZ_BURPS</name>
<feature type="chain" id="PRO_0000237443" description="DNA-directed RNA polymerase subunit omega">
    <location>
        <begin position="1"/>
        <end position="67"/>
    </location>
</feature>
<evidence type="ECO:0000255" key="1">
    <source>
        <dbReference type="HAMAP-Rule" id="MF_00366"/>
    </source>
</evidence>
<reference key="1">
    <citation type="journal article" date="2004" name="Proc. Natl. Acad. Sci. U.S.A.">
        <title>Genomic plasticity of the causative agent of melioidosis, Burkholderia pseudomallei.</title>
        <authorList>
            <person name="Holden M.T.G."/>
            <person name="Titball R.W."/>
            <person name="Peacock S.J."/>
            <person name="Cerdeno-Tarraga A.-M."/>
            <person name="Atkins T."/>
            <person name="Crossman L.C."/>
            <person name="Pitt T."/>
            <person name="Churcher C."/>
            <person name="Mungall K.L."/>
            <person name="Bentley S.D."/>
            <person name="Sebaihia M."/>
            <person name="Thomson N.R."/>
            <person name="Bason N."/>
            <person name="Beacham I.R."/>
            <person name="Brooks K."/>
            <person name="Brown K.A."/>
            <person name="Brown N.F."/>
            <person name="Challis G.L."/>
            <person name="Cherevach I."/>
            <person name="Chillingworth T."/>
            <person name="Cronin A."/>
            <person name="Crossett B."/>
            <person name="Davis P."/>
            <person name="DeShazer D."/>
            <person name="Feltwell T."/>
            <person name="Fraser A."/>
            <person name="Hance Z."/>
            <person name="Hauser H."/>
            <person name="Holroyd S."/>
            <person name="Jagels K."/>
            <person name="Keith K.E."/>
            <person name="Maddison M."/>
            <person name="Moule S."/>
            <person name="Price C."/>
            <person name="Quail M.A."/>
            <person name="Rabbinowitsch E."/>
            <person name="Rutherford K."/>
            <person name="Sanders M."/>
            <person name="Simmonds M."/>
            <person name="Songsivilai S."/>
            <person name="Stevens K."/>
            <person name="Tumapa S."/>
            <person name="Vesaratchavest M."/>
            <person name="Whitehead S."/>
            <person name="Yeats C."/>
            <person name="Barrell B.G."/>
            <person name="Oyston P.C.F."/>
            <person name="Parkhill J."/>
        </authorList>
    </citation>
    <scope>NUCLEOTIDE SEQUENCE [LARGE SCALE GENOMIC DNA]</scope>
    <source>
        <strain>K96243</strain>
    </source>
</reference>
<proteinExistence type="inferred from homology"/>
<accession>Q63RV8</accession>